<name>EXOC5_HUMAN</name>
<sequence length="708" mass="81853">MATTAELFEEPFVADEYIERLVWRTPGGGSRGGPEAFDPKRLLEEFVNHIQELQIMDERIQRKVEKLEQQCQKEAKEFAKKVQELQKSNQVAFQHFQELDEHISYVATKVCHLGDQLEGVNTPRQRAVEAQKLMKYFNEFLDGELKSDVFTNSEKIKEAADIIQKLHLIAQELPFDRFSEVKSKIASKYHDLECQLIQEFTSAQRRGEISRMREVAAVLLHFKGYSHCVDVYIKQCQEGAYLRNDIFEDAGILCQRVNKQVGDIFSNPETVLAKLIQNVFEIKLQSFVKEQLEECRKSDAEQYLKNLYDLYTRTTNLSSKLMEFNLGTDKQTFLSKLIKSIFISYLENYIEVETGYLKSRSAMILQRYYDSKNHQKRSIGTGGIQDLKERIRQRTNLPLGPSIDTHGETFLSQEVVVNLLQETKQAFERCHRLSDPSDLPRNAFRIFTILVEFLCIEHIDYALETGLAGIPSSDSRNANLYFLDVVQQANTIFHLFDKQFNDHLMPLISSSPKLSECLQKKKEIIEQMEMKLDTGIDRTLNCMIGQMKHILAAEQKKTDFKPEDENNVLIQYTNACVKVCAYVRKQVEKIKNSMDGKNVDTVLMELGVRFHRLIYEHLQQYSYSCMGGMLAICDVAEYRKCAKDFKIPMVLHLFDTLHALCNLLVVAPDNLKQVCSGEQLANLDKNILHSFVQLRADYRSARLARHFS</sequence>
<keyword id="KW-0007">Acetylation</keyword>
<keyword id="KW-0175">Coiled coil</keyword>
<keyword id="KW-0963">Cytoplasm</keyword>
<keyword id="KW-0268">Exocytosis</keyword>
<keyword id="KW-0597">Phosphoprotein</keyword>
<keyword id="KW-0653">Protein transport</keyword>
<keyword id="KW-1267">Proteomics identification</keyword>
<keyword id="KW-1185">Reference proteome</keyword>
<keyword id="KW-0813">Transport</keyword>
<dbReference type="EMBL" id="U85946">
    <property type="protein sequence ID" value="AAB53388.1"/>
    <property type="molecule type" value="mRNA"/>
</dbReference>
<dbReference type="EMBL" id="AK312523">
    <property type="protein sequence ID" value="BAG35422.1"/>
    <property type="molecule type" value="mRNA"/>
</dbReference>
<dbReference type="EMBL" id="CH471061">
    <property type="protein sequence ID" value="EAW80699.1"/>
    <property type="molecule type" value="Genomic_DNA"/>
</dbReference>
<dbReference type="EMBL" id="BC041126">
    <property type="protein sequence ID" value="AAH41126.1"/>
    <property type="molecule type" value="mRNA"/>
</dbReference>
<dbReference type="CCDS" id="CCDS45111.1"/>
<dbReference type="RefSeq" id="NP_006535.1">
    <property type="nucleotide sequence ID" value="NM_006544.4"/>
</dbReference>
<dbReference type="SMR" id="O00471"/>
<dbReference type="BioGRID" id="115884">
    <property type="interactions" value="139"/>
</dbReference>
<dbReference type="ComplexPortal" id="CPX-4943">
    <property type="entry name" value="Exocyst, EXOC6 variant"/>
</dbReference>
<dbReference type="ComplexPortal" id="CPX-4944">
    <property type="entry name" value="Exocyst, EXOC6B variant"/>
</dbReference>
<dbReference type="CORUM" id="O00471"/>
<dbReference type="FunCoup" id="O00471">
    <property type="interactions" value="3781"/>
</dbReference>
<dbReference type="IntAct" id="O00471">
    <property type="interactions" value="120"/>
</dbReference>
<dbReference type="MINT" id="O00471"/>
<dbReference type="STRING" id="9606.ENSP00000484855"/>
<dbReference type="TCDB" id="1.F.2.1.2">
    <property type="family name" value="the octameric exocyst (exocyst) family"/>
</dbReference>
<dbReference type="GlyGen" id="O00471">
    <property type="glycosylation" value="1 site, 1 O-linked glycan (1 site)"/>
</dbReference>
<dbReference type="iPTMnet" id="O00471"/>
<dbReference type="PhosphoSitePlus" id="O00471"/>
<dbReference type="BioMuta" id="EXOC5"/>
<dbReference type="jPOST" id="O00471"/>
<dbReference type="MassIVE" id="O00471"/>
<dbReference type="PaxDb" id="9606-ENSP00000484855"/>
<dbReference type="PeptideAtlas" id="O00471"/>
<dbReference type="ProteomicsDB" id="47919"/>
<dbReference type="Pumba" id="O00471"/>
<dbReference type="Antibodypedia" id="24095">
    <property type="antibodies" value="127 antibodies from 26 providers"/>
</dbReference>
<dbReference type="DNASU" id="10640"/>
<dbReference type="Ensembl" id="ENST00000621441.5">
    <property type="protein sequence ID" value="ENSP00000484855.1"/>
    <property type="gene ID" value="ENSG00000070367.17"/>
</dbReference>
<dbReference type="GeneID" id="10640"/>
<dbReference type="KEGG" id="hsa:10640"/>
<dbReference type="MANE-Select" id="ENST00000621441.5">
    <property type="protein sequence ID" value="ENSP00000484855.1"/>
    <property type="RefSeq nucleotide sequence ID" value="NM_006544.4"/>
    <property type="RefSeq protein sequence ID" value="NP_006535.1"/>
</dbReference>
<dbReference type="UCSC" id="uc001xct.4">
    <property type="organism name" value="human"/>
</dbReference>
<dbReference type="AGR" id="HGNC:10696"/>
<dbReference type="CTD" id="10640"/>
<dbReference type="DisGeNET" id="10640"/>
<dbReference type="GeneCards" id="EXOC5"/>
<dbReference type="HGNC" id="HGNC:10696">
    <property type="gene designation" value="EXOC5"/>
</dbReference>
<dbReference type="HPA" id="ENSG00000070367">
    <property type="expression patterns" value="Low tissue specificity"/>
</dbReference>
<dbReference type="MIM" id="604469">
    <property type="type" value="gene"/>
</dbReference>
<dbReference type="neXtProt" id="NX_O00471"/>
<dbReference type="OpenTargets" id="ENSG00000070367"/>
<dbReference type="PharmGKB" id="PA35619"/>
<dbReference type="VEuPathDB" id="HostDB:ENSG00000070367"/>
<dbReference type="eggNOG" id="KOG3745">
    <property type="taxonomic scope" value="Eukaryota"/>
</dbReference>
<dbReference type="GeneTree" id="ENSGT00390000012837"/>
<dbReference type="HOGENOM" id="CLU_020771_1_0_1"/>
<dbReference type="InParanoid" id="O00471"/>
<dbReference type="OMA" id="PLCKHHY"/>
<dbReference type="OrthoDB" id="125856at2759"/>
<dbReference type="PAN-GO" id="O00471">
    <property type="GO annotations" value="3 GO annotations based on evolutionary models"/>
</dbReference>
<dbReference type="PhylomeDB" id="O00471"/>
<dbReference type="TreeFam" id="TF314966"/>
<dbReference type="PathwayCommons" id="O00471"/>
<dbReference type="Reactome" id="R-HSA-1445148">
    <property type="pathway name" value="Translocation of SLC2A4 (GLUT4) to the plasma membrane"/>
</dbReference>
<dbReference type="Reactome" id="R-HSA-264876">
    <property type="pathway name" value="Insulin processing"/>
</dbReference>
<dbReference type="Reactome" id="R-HSA-5620916">
    <property type="pathway name" value="VxPx cargo-targeting to cilium"/>
</dbReference>
<dbReference type="SignaLink" id="O00471"/>
<dbReference type="SIGNOR" id="O00471"/>
<dbReference type="BioGRID-ORCS" id="10640">
    <property type="hits" value="353 hits in 1149 CRISPR screens"/>
</dbReference>
<dbReference type="CD-CODE" id="FB4E32DD">
    <property type="entry name" value="Presynaptic clusters and postsynaptic densities"/>
</dbReference>
<dbReference type="ChiTaRS" id="EXOC5">
    <property type="organism name" value="human"/>
</dbReference>
<dbReference type="GeneWiki" id="EXOC5"/>
<dbReference type="GenomeRNAi" id="10640"/>
<dbReference type="Pharos" id="O00471">
    <property type="development level" value="Tbio"/>
</dbReference>
<dbReference type="PRO" id="PR:O00471"/>
<dbReference type="Proteomes" id="UP000005640">
    <property type="component" value="Chromosome 14"/>
</dbReference>
<dbReference type="RNAct" id="O00471">
    <property type="molecule type" value="protein"/>
</dbReference>
<dbReference type="Bgee" id="ENSG00000070367">
    <property type="expression patterns" value="Expressed in cortical plate and 195 other cell types or tissues"/>
</dbReference>
<dbReference type="ExpressionAtlas" id="O00471">
    <property type="expression patterns" value="baseline and differential"/>
</dbReference>
<dbReference type="GO" id="GO:0005737">
    <property type="term" value="C:cytoplasm"/>
    <property type="evidence" value="ECO:0000304"/>
    <property type="project" value="ProtInc"/>
</dbReference>
<dbReference type="GO" id="GO:0005829">
    <property type="term" value="C:cytosol"/>
    <property type="evidence" value="ECO:0000304"/>
    <property type="project" value="Reactome"/>
</dbReference>
<dbReference type="GO" id="GO:0000145">
    <property type="term" value="C:exocyst"/>
    <property type="evidence" value="ECO:0000318"/>
    <property type="project" value="GO_Central"/>
</dbReference>
<dbReference type="GO" id="GO:0030496">
    <property type="term" value="C:midbody"/>
    <property type="evidence" value="ECO:0007669"/>
    <property type="project" value="UniProtKB-SubCell"/>
</dbReference>
<dbReference type="GO" id="GO:0031267">
    <property type="term" value="F:small GTPase binding"/>
    <property type="evidence" value="ECO:0000353"/>
    <property type="project" value="UniProtKB"/>
</dbReference>
<dbReference type="GO" id="GO:1904019">
    <property type="term" value="P:epithelial cell apoptotic process"/>
    <property type="evidence" value="ECO:0007669"/>
    <property type="project" value="Ensembl"/>
</dbReference>
<dbReference type="GO" id="GO:0001736">
    <property type="term" value="P:establishment of planar polarity"/>
    <property type="evidence" value="ECO:0007669"/>
    <property type="project" value="Ensembl"/>
</dbReference>
<dbReference type="GO" id="GO:0006887">
    <property type="term" value="P:exocytosis"/>
    <property type="evidence" value="ECO:0000318"/>
    <property type="project" value="GO_Central"/>
</dbReference>
<dbReference type="GO" id="GO:0006893">
    <property type="term" value="P:Golgi to plasma membrane transport"/>
    <property type="evidence" value="ECO:0000318"/>
    <property type="project" value="GO_Central"/>
</dbReference>
<dbReference type="GO" id="GO:0090148">
    <property type="term" value="P:membrane fission"/>
    <property type="evidence" value="ECO:0000303"/>
    <property type="project" value="ComplexPortal"/>
</dbReference>
<dbReference type="GO" id="GO:0000281">
    <property type="term" value="P:mitotic cytokinesis"/>
    <property type="evidence" value="ECO:0000303"/>
    <property type="project" value="ComplexPortal"/>
</dbReference>
<dbReference type="GO" id="GO:1905515">
    <property type="term" value="P:non-motile cilium assembly"/>
    <property type="evidence" value="ECO:0007669"/>
    <property type="project" value="Ensembl"/>
</dbReference>
<dbReference type="GO" id="GO:0006892">
    <property type="term" value="P:post-Golgi vesicle-mediated transport"/>
    <property type="evidence" value="ECO:0000304"/>
    <property type="project" value="ProtInc"/>
</dbReference>
<dbReference type="GO" id="GO:0072659">
    <property type="term" value="P:protein localization to plasma membrane"/>
    <property type="evidence" value="ECO:0007669"/>
    <property type="project" value="Ensembl"/>
</dbReference>
<dbReference type="GO" id="GO:0015031">
    <property type="term" value="P:protein transport"/>
    <property type="evidence" value="ECO:0007669"/>
    <property type="project" value="UniProtKB-KW"/>
</dbReference>
<dbReference type="GO" id="GO:0006904">
    <property type="term" value="P:vesicle docking involved in exocytosis"/>
    <property type="evidence" value="ECO:0000303"/>
    <property type="project" value="ComplexPortal"/>
</dbReference>
<dbReference type="GO" id="GO:0090522">
    <property type="term" value="P:vesicle tethering involved in exocytosis"/>
    <property type="evidence" value="ECO:0000303"/>
    <property type="project" value="ComplexPortal"/>
</dbReference>
<dbReference type="InterPro" id="IPR009976">
    <property type="entry name" value="Sec10-like"/>
</dbReference>
<dbReference type="InterPro" id="IPR048627">
    <property type="entry name" value="Sec10_HB"/>
</dbReference>
<dbReference type="InterPro" id="IPR048625">
    <property type="entry name" value="Sec10_N"/>
</dbReference>
<dbReference type="PANTHER" id="PTHR12100:SF4">
    <property type="entry name" value="EXOCYST COMPLEX COMPONENT 5"/>
    <property type="match status" value="1"/>
</dbReference>
<dbReference type="PANTHER" id="PTHR12100">
    <property type="entry name" value="SEC10"/>
    <property type="match status" value="1"/>
</dbReference>
<dbReference type="Pfam" id="PF07393">
    <property type="entry name" value="Sec10_HB"/>
    <property type="match status" value="1"/>
</dbReference>
<dbReference type="Pfam" id="PF20667">
    <property type="entry name" value="Sec10_N"/>
    <property type="match status" value="1"/>
</dbReference>
<protein>
    <recommendedName>
        <fullName>Exocyst complex component 5</fullName>
    </recommendedName>
    <alternativeName>
        <fullName>Exocyst complex component Sec10</fullName>
        <shortName>hSec10</shortName>
    </alternativeName>
</protein>
<proteinExistence type="evidence at protein level"/>
<evidence type="ECO:0000250" key="1">
    <source>
        <dbReference type="UniProtKB" id="P97878"/>
    </source>
</evidence>
<evidence type="ECO:0000250" key="2">
    <source>
        <dbReference type="UniProtKB" id="Q3TPX4"/>
    </source>
</evidence>
<evidence type="ECO:0000255" key="3"/>
<evidence type="ECO:0000269" key="4">
    <source>
    </source>
</evidence>
<evidence type="ECO:0000269" key="5">
    <source>
    </source>
</evidence>
<evidence type="ECO:0000305" key="6"/>
<evidence type="ECO:0007744" key="7">
    <source>
    </source>
</evidence>
<evidence type="ECO:0007744" key="8">
    <source>
    </source>
</evidence>
<evidence type="ECO:0007744" key="9">
    <source>
    </source>
</evidence>
<comment type="function">
    <text>Component of the exocyst complex involved in the docking of exocytic vesicles with fusion sites on the plasma membrane.</text>
</comment>
<comment type="subunit">
    <text evidence="1 2">The exocyst complex is composed of EXOC1, EXOC2, EXOC3, EXOC4, EXOC5, EXOC6, EXOC7 and EXOC8 (By similarity). Interacts with EXOC3L1 (By similarity).</text>
</comment>
<comment type="interaction">
    <interactant intactId="EBI-949824">
        <id>O00471</id>
    </interactant>
    <interactant intactId="EBI-9977322">
        <id>A0AVN2</id>
        <label>BARD1</label>
    </interactant>
    <organismsDiffer>false</organismsDiffer>
    <experiments>3</experiments>
</comment>
<comment type="interaction">
    <interactant intactId="EBI-949824">
        <id>O00471</id>
    </interactant>
    <interactant intactId="EBI-473181">
        <id>Q99728</id>
        <label>BARD1</label>
    </interactant>
    <organismsDiffer>false</organismsDiffer>
    <experiments>3</experiments>
</comment>
<comment type="interaction">
    <interactant intactId="EBI-949824">
        <id>O00471</id>
    </interactant>
    <interactant intactId="EBI-12275524">
        <id>P23560-2</id>
        <label>BDNF</label>
    </interactant>
    <organismsDiffer>false</organismsDiffer>
    <experiments>3</experiments>
</comment>
<comment type="interaction">
    <interactant intactId="EBI-949824">
        <id>O00471</id>
    </interactant>
    <interactant intactId="EBI-5666615">
        <id>Q5PSV4</id>
        <label>BRMS1L</label>
    </interactant>
    <organismsDiffer>false</organismsDiffer>
    <experiments>3</experiments>
</comment>
<comment type="interaction">
    <interactant intactId="EBI-949824">
        <id>O00471</id>
    </interactant>
    <interactant intactId="EBI-747505">
        <id>Q8TAB5</id>
        <label>C1orf216</label>
    </interactant>
    <organismsDiffer>false</organismsDiffer>
    <experiments>3</experiments>
</comment>
<comment type="interaction">
    <interactant intactId="EBI-949824">
        <id>O00471</id>
    </interactant>
    <interactant intactId="EBI-10171570">
        <id>Q68D86</id>
        <label>CCDC102B</label>
    </interactant>
    <organismsDiffer>false</organismsDiffer>
    <experiments>3</experiments>
</comment>
<comment type="interaction">
    <interactant intactId="EBI-949824">
        <id>O00471</id>
    </interactant>
    <interactant intactId="EBI-739060">
        <id>P02511</id>
        <label>CRYAB</label>
    </interactant>
    <organismsDiffer>false</organismsDiffer>
    <experiments>3</experiments>
</comment>
<comment type="interaction">
    <interactant intactId="EBI-949824">
        <id>O00471</id>
    </interactant>
    <interactant intactId="EBI-7519424">
        <id>P53674</id>
        <label>CRYBB1</label>
    </interactant>
    <organismsDiffer>false</organismsDiffer>
    <experiments>3</experiments>
</comment>
<comment type="interaction">
    <interactant intactId="EBI-949824">
        <id>O00471</id>
    </interactant>
    <interactant intactId="EBI-748597">
        <id>Q05D60</id>
        <label>DEUP1</label>
    </interactant>
    <organismsDiffer>false</organismsDiffer>
    <experiments>11</experiments>
</comment>
<comment type="interaction">
    <interactant intactId="EBI-949824">
        <id>O00471</id>
    </interactant>
    <interactant intactId="EBI-10240074">
        <id>Q3B7T1-5</id>
        <label>EDRF1</label>
    </interactant>
    <organismsDiffer>false</organismsDiffer>
    <experiments>3</experiments>
</comment>
<comment type="interaction">
    <interactant intactId="EBI-949824">
        <id>O00471</id>
    </interactant>
    <interactant intactId="EBI-10249724">
        <id>Q6FHV6</id>
        <label>ENO2</label>
    </interactant>
    <organismsDiffer>false</organismsDiffer>
    <experiments>3</experiments>
</comment>
<comment type="interaction">
    <interactant intactId="EBI-949824">
        <id>O00471</id>
    </interactant>
    <interactant intactId="EBI-1223394">
        <id>Q8TAG9</id>
        <label>EXOC6</label>
    </interactant>
    <organismsDiffer>false</organismsDiffer>
    <experiments>8</experiments>
</comment>
<comment type="interaction">
    <interactant intactId="EBI-949824">
        <id>O00471</id>
    </interactant>
    <interactant intactId="EBI-2690026">
        <id>Q9Y2D4</id>
        <label>EXOC6B</label>
    </interactant>
    <organismsDiffer>false</organismsDiffer>
    <experiments>7</experiments>
</comment>
<comment type="interaction">
    <interactant intactId="EBI-949824">
        <id>O00471</id>
    </interactant>
    <interactant intactId="EBI-9640259">
        <id>P02671-2</id>
        <label>FGA</label>
    </interactant>
    <organismsDiffer>false</organismsDiffer>
    <experiments>3</experiments>
</comment>
<comment type="interaction">
    <interactant intactId="EBI-949824">
        <id>O00471</id>
    </interactant>
    <interactant intactId="EBI-741729">
        <id>Q96NE9</id>
        <label>FRMD6</label>
    </interactant>
    <organismsDiffer>false</organismsDiffer>
    <experiments>3</experiments>
</comment>
<comment type="interaction">
    <interactant intactId="EBI-949824">
        <id>O00471</id>
    </interactant>
    <interactant intactId="EBI-354056">
        <id>P04406</id>
        <label>GAPDH</label>
    </interactant>
    <organismsDiffer>false</organismsDiffer>
    <experiments>3</experiments>
</comment>
<comment type="interaction">
    <interactant intactId="EBI-949824">
        <id>O00471</id>
    </interactant>
    <interactant intactId="EBI-750003">
        <id>Q8N4P3</id>
        <label>HDDC3</label>
    </interactant>
    <organismsDiffer>false</organismsDiffer>
    <experiments>3</experiments>
</comment>
<comment type="interaction">
    <interactant intactId="EBI-949824">
        <id>O00471</id>
    </interactant>
    <interactant intactId="EBI-16429135">
        <id>A0A0S2Z4Q4</id>
        <label>HGS</label>
    </interactant>
    <organismsDiffer>false</organismsDiffer>
    <experiments>3</experiments>
</comment>
<comment type="interaction">
    <interactant intactId="EBI-949824">
        <id>O00471</id>
    </interactant>
    <interactant intactId="EBI-740220">
        <id>O14964</id>
        <label>HGS</label>
    </interactant>
    <organismsDiffer>false</organismsDiffer>
    <experiments>3</experiments>
</comment>
<comment type="interaction">
    <interactant intactId="EBI-949824">
        <id>O00471</id>
    </interactant>
    <interactant intactId="EBI-466029">
        <id>P42858</id>
        <label>HTT</label>
    </interactant>
    <organismsDiffer>false</organismsDiffer>
    <experiments>3</experiments>
</comment>
<comment type="interaction">
    <interactant intactId="EBI-949824">
        <id>O00471</id>
    </interactant>
    <interactant intactId="EBI-725672">
        <id>Q9NWB7</id>
        <label>IFT57</label>
    </interactant>
    <organismsDiffer>false</organismsDiffer>
    <experiments>3</experiments>
</comment>
<comment type="interaction">
    <interactant intactId="EBI-949824">
        <id>O00471</id>
    </interactant>
    <interactant intactId="EBI-14069005">
        <id>Q9BVG8-5</id>
        <label>KIFC3</label>
    </interactant>
    <organismsDiffer>false</organismsDiffer>
    <experiments>3</experiments>
</comment>
<comment type="interaction">
    <interactant intactId="EBI-949824">
        <id>O00471</id>
    </interactant>
    <interactant intactId="EBI-739657">
        <id>Q9BQD3</id>
        <label>KXD1</label>
    </interactant>
    <organismsDiffer>false</organismsDiffer>
    <experiments>4</experiments>
</comment>
<comment type="interaction">
    <interactant intactId="EBI-949824">
        <id>O00471</id>
    </interactant>
    <interactant intactId="EBI-5651459">
        <id>P43357</id>
        <label>MAGEA3</label>
    </interactant>
    <organismsDiffer>false</organismsDiffer>
    <experiments>3</experiments>
</comment>
<comment type="interaction">
    <interactant intactId="EBI-949824">
        <id>O00471</id>
    </interactant>
    <interactant intactId="EBI-1045155">
        <id>P43360</id>
        <label>MAGEA6</label>
    </interactant>
    <organismsDiffer>false</organismsDiffer>
    <experiments>6</experiments>
</comment>
<comment type="interaction">
    <interactant intactId="EBI-949824">
        <id>O00471</id>
    </interactant>
    <interactant intactId="EBI-3932815">
        <id>P00973</id>
        <label>OAS1</label>
    </interactant>
    <organismsDiffer>false</organismsDiffer>
    <experiments>3</experiments>
</comment>
<comment type="interaction">
    <interactant intactId="EBI-949824">
        <id>O00471</id>
    </interactant>
    <interactant intactId="EBI-12081862">
        <id>P00973-2</id>
        <label>OAS1</label>
    </interactant>
    <organismsDiffer>false</organismsDiffer>
    <experiments>6</experiments>
</comment>
<comment type="interaction">
    <interactant intactId="EBI-949824">
        <id>O00471</id>
    </interactant>
    <interactant intactId="EBI-50433196">
        <id>A0A6Q8PF08</id>
        <label>PMP22</label>
    </interactant>
    <organismsDiffer>false</organismsDiffer>
    <experiments>3</experiments>
</comment>
<comment type="interaction">
    <interactant intactId="EBI-949824">
        <id>O00471</id>
    </interactant>
    <interactant intactId="EBI-16430249">
        <id>A0A0S2Z528</id>
        <label>PSTPIP1</label>
    </interactant>
    <organismsDiffer>false</organismsDiffer>
    <experiments>3</experiments>
</comment>
<comment type="interaction">
    <interactant intactId="EBI-949824">
        <id>O00471</id>
    </interactant>
    <interactant intactId="EBI-1383632">
        <id>Q13882</id>
        <label>PTK6</label>
    </interactant>
    <organismsDiffer>false</organismsDiffer>
    <experiments>6</experiments>
</comment>
<comment type="interaction">
    <interactant intactId="EBI-949824">
        <id>O00471</id>
    </interactant>
    <interactant intactId="EBI-751215">
        <id>Q9ULZ3</id>
        <label>PYCARD</label>
    </interactant>
    <organismsDiffer>false</organismsDiffer>
    <experiments>5</experiments>
</comment>
<comment type="interaction">
    <interactant intactId="EBI-949824">
        <id>O00471</id>
    </interactant>
    <interactant intactId="EBI-1056404">
        <id>P61106</id>
        <label>RAB14</label>
    </interactant>
    <organismsDiffer>false</organismsDiffer>
    <experiments>6</experiments>
</comment>
<comment type="interaction">
    <interactant intactId="EBI-949824">
        <id>O00471</id>
    </interactant>
    <interactant intactId="EBI-722284">
        <id>P20338</id>
        <label>RAB4A</label>
    </interactant>
    <organismsDiffer>false</organismsDiffer>
    <experiments>6</experiments>
</comment>
<comment type="interaction">
    <interactant intactId="EBI-949824">
        <id>O00471</id>
    </interactant>
    <interactant intactId="EBI-10218066">
        <id>P61018</id>
        <label>RAB4B</label>
    </interactant>
    <organismsDiffer>false</organismsDiffer>
    <experiments>6</experiments>
</comment>
<comment type="interaction">
    <interactant intactId="EBI-949824">
        <id>O00471</id>
    </interactant>
    <interactant intactId="EBI-985879">
        <id>P37840</id>
        <label>SNCA</label>
    </interactant>
    <organismsDiffer>false</organismsDiffer>
    <experiments>3</experiments>
</comment>
<comment type="interaction">
    <interactant intactId="EBI-949824">
        <id>O00471</id>
    </interactant>
    <interactant intactId="EBI-722584">
        <id>Q96E40</id>
        <label>SPACA9</label>
    </interactant>
    <organismsDiffer>false</organismsDiffer>
    <experiments>3</experiments>
</comment>
<comment type="interaction">
    <interactant intactId="EBI-949824">
        <id>O00471</id>
    </interactant>
    <interactant intactId="EBI-5235340">
        <id>Q7Z699</id>
        <label>SPRED1</label>
    </interactant>
    <organismsDiffer>false</organismsDiffer>
    <experiments>3</experiments>
</comment>
<comment type="interaction">
    <interactant intactId="EBI-949824">
        <id>O00471</id>
    </interactant>
    <interactant intactId="EBI-357085">
        <id>Q9UNE7</id>
        <label>STUB1</label>
    </interactant>
    <organismsDiffer>false</organismsDiffer>
    <experiments>3</experiments>
</comment>
<comment type="interaction">
    <interactant intactId="EBI-949824">
        <id>O00471</id>
    </interactant>
    <interactant intactId="EBI-372899">
        <id>Q13148</id>
        <label>TARDBP</label>
    </interactant>
    <organismsDiffer>false</organismsDiffer>
    <experiments>6</experiments>
</comment>
<comment type="interaction">
    <interactant intactId="EBI-949824">
        <id>O00471</id>
    </interactant>
    <interactant intactId="EBI-1765605">
        <id>Q96FV9</id>
        <label>THOC1</label>
    </interactant>
    <organismsDiffer>false</organismsDiffer>
    <experiments>3</experiments>
</comment>
<comment type="interaction">
    <interactant intactId="EBI-949824">
        <id>O00471</id>
    </interactant>
    <interactant intactId="EBI-431907">
        <id>O14787</id>
        <label>TNPO2</label>
    </interactant>
    <organismsDiffer>false</organismsDiffer>
    <experiments>4</experiments>
</comment>
<comment type="interaction">
    <interactant intactId="EBI-949824">
        <id>O00471</id>
    </interactant>
    <interactant intactId="EBI-12806590">
        <id>Q86WV8</id>
        <label>TSC1</label>
    </interactant>
    <organismsDiffer>false</organismsDiffer>
    <experiments>3</experiments>
</comment>
<comment type="interaction">
    <interactant intactId="EBI-949824">
        <id>O00471</id>
    </interactant>
    <interactant intactId="EBI-10182647">
        <id>Q6PF05-3</id>
        <label>TTC23L</label>
    </interactant>
    <organismsDiffer>false</organismsDiffer>
    <experiments>3</experiments>
</comment>
<comment type="interaction">
    <interactant intactId="EBI-949824">
        <id>O00471</id>
    </interactant>
    <interactant intactId="EBI-6116822">
        <id>Q8N3L3</id>
        <label>TXLNB</label>
    </interactant>
    <organismsDiffer>false</organismsDiffer>
    <experiments>4</experiments>
</comment>
<comment type="interaction">
    <interactant intactId="EBI-949824">
        <id>O00471</id>
    </interactant>
    <interactant intactId="EBI-746539">
        <id>P83876</id>
        <label>TXNL4A</label>
    </interactant>
    <organismsDiffer>false</organismsDiffer>
    <experiments>3</experiments>
</comment>
<comment type="interaction">
    <interactant intactId="EBI-949824">
        <id>O00471</id>
    </interactant>
    <interactant intactId="EBI-743272">
        <id>O75604</id>
        <label>USP2</label>
    </interactant>
    <organismsDiffer>false</organismsDiffer>
    <experiments>3</experiments>
</comment>
<comment type="interaction">
    <interactant intactId="EBI-949824">
        <id>O00471</id>
    </interactant>
    <interactant intactId="EBI-720609">
        <id>O76024</id>
        <label>WFS1</label>
    </interactant>
    <organismsDiffer>false</organismsDiffer>
    <experiments>3</experiments>
</comment>
<comment type="subcellular location">
    <subcellularLocation>
        <location evidence="5">Cytoplasm</location>
    </subcellularLocation>
    <subcellularLocation>
        <location evidence="4">Midbody</location>
    </subcellularLocation>
    <text evidence="4">Localization at the midbody requires the presence of RALA, EXOC2 and EXOC3.</text>
</comment>
<comment type="tissue specificity">
    <text evidence="5">Ubiquitous.</text>
</comment>
<comment type="similarity">
    <text evidence="6">Belongs to the SEC10 family.</text>
</comment>
<feature type="initiator methionine" description="Removed" evidence="8">
    <location>
        <position position="1"/>
    </location>
</feature>
<feature type="chain" id="PRO_0000118943" description="Exocyst complex component 5">
    <location>
        <begin position="2"/>
        <end position="708"/>
    </location>
</feature>
<feature type="coiled-coil region" evidence="3">
    <location>
        <begin position="40"/>
        <end position="101"/>
    </location>
</feature>
<feature type="modified residue" description="N-acetylalanine" evidence="8">
    <location>
        <position position="2"/>
    </location>
</feature>
<feature type="modified residue" description="Phosphothreonine" evidence="7 9">
    <location>
        <position position="122"/>
    </location>
</feature>
<feature type="modified residue" description="Phosphothreonine" evidence="1">
    <location>
        <position position="395"/>
    </location>
</feature>
<feature type="modified residue" description="Phosphothreonine" evidence="1">
    <location>
        <position position="405"/>
    </location>
</feature>
<feature type="modified residue" description="Phosphoserine" evidence="1">
    <location>
        <position position="412"/>
    </location>
</feature>
<feature type="sequence variant" id="VAR_048957" description="In dbSNP:rs35132458.">
    <original>E</original>
    <variation>D</variation>
    <location>
        <position position="10"/>
    </location>
</feature>
<feature type="sequence conflict" description="In Ref. 4; AAH41126." evidence="6" ref="4">
    <original>G</original>
    <variation>R</variation>
    <location>
        <position position="545"/>
    </location>
</feature>
<accession>O00471</accession>
<accession>B2R6C5</accession>
<accession>Q8IW24</accession>
<gene>
    <name type="primary">EXOC5</name>
    <name type="synonym">SEC10</name>
    <name type="synonym">SEC10L1</name>
</gene>
<reference key="1">
    <citation type="journal article" date="1997" name="FEBS Lett.">
        <title>Identification and characterization of homologues of the exocyst component Sec10p.</title>
        <authorList>
            <person name="Guo W."/>
            <person name="Roth D."/>
            <person name="Gatti E."/>
            <person name="De Camilli P."/>
            <person name="Novick P."/>
        </authorList>
    </citation>
    <scope>NUCLEOTIDE SEQUENCE [MRNA]</scope>
    <scope>SUBCELLULAR LOCATION</scope>
    <scope>TISSUE SPECIFICITY</scope>
</reference>
<reference key="2">
    <citation type="journal article" date="2004" name="Nat. Genet.">
        <title>Complete sequencing and characterization of 21,243 full-length human cDNAs.</title>
        <authorList>
            <person name="Ota T."/>
            <person name="Suzuki Y."/>
            <person name="Nishikawa T."/>
            <person name="Otsuki T."/>
            <person name="Sugiyama T."/>
            <person name="Irie R."/>
            <person name="Wakamatsu A."/>
            <person name="Hayashi K."/>
            <person name="Sato H."/>
            <person name="Nagai K."/>
            <person name="Kimura K."/>
            <person name="Makita H."/>
            <person name="Sekine M."/>
            <person name="Obayashi M."/>
            <person name="Nishi T."/>
            <person name="Shibahara T."/>
            <person name="Tanaka T."/>
            <person name="Ishii S."/>
            <person name="Yamamoto J."/>
            <person name="Saito K."/>
            <person name="Kawai Y."/>
            <person name="Isono Y."/>
            <person name="Nakamura Y."/>
            <person name="Nagahari K."/>
            <person name="Murakami K."/>
            <person name="Yasuda T."/>
            <person name="Iwayanagi T."/>
            <person name="Wagatsuma M."/>
            <person name="Shiratori A."/>
            <person name="Sudo H."/>
            <person name="Hosoiri T."/>
            <person name="Kaku Y."/>
            <person name="Kodaira H."/>
            <person name="Kondo H."/>
            <person name="Sugawara M."/>
            <person name="Takahashi M."/>
            <person name="Kanda K."/>
            <person name="Yokoi T."/>
            <person name="Furuya T."/>
            <person name="Kikkawa E."/>
            <person name="Omura Y."/>
            <person name="Abe K."/>
            <person name="Kamihara K."/>
            <person name="Katsuta N."/>
            <person name="Sato K."/>
            <person name="Tanikawa M."/>
            <person name="Yamazaki M."/>
            <person name="Ninomiya K."/>
            <person name="Ishibashi T."/>
            <person name="Yamashita H."/>
            <person name="Murakawa K."/>
            <person name="Fujimori K."/>
            <person name="Tanai H."/>
            <person name="Kimata M."/>
            <person name="Watanabe M."/>
            <person name="Hiraoka S."/>
            <person name="Chiba Y."/>
            <person name="Ishida S."/>
            <person name="Ono Y."/>
            <person name="Takiguchi S."/>
            <person name="Watanabe S."/>
            <person name="Yosida M."/>
            <person name="Hotuta T."/>
            <person name="Kusano J."/>
            <person name="Kanehori K."/>
            <person name="Takahashi-Fujii A."/>
            <person name="Hara H."/>
            <person name="Tanase T.-O."/>
            <person name="Nomura Y."/>
            <person name="Togiya S."/>
            <person name="Komai F."/>
            <person name="Hara R."/>
            <person name="Takeuchi K."/>
            <person name="Arita M."/>
            <person name="Imose N."/>
            <person name="Musashino K."/>
            <person name="Yuuki H."/>
            <person name="Oshima A."/>
            <person name="Sasaki N."/>
            <person name="Aotsuka S."/>
            <person name="Yoshikawa Y."/>
            <person name="Matsunawa H."/>
            <person name="Ichihara T."/>
            <person name="Shiohata N."/>
            <person name="Sano S."/>
            <person name="Moriya S."/>
            <person name="Momiyama H."/>
            <person name="Satoh N."/>
            <person name="Takami S."/>
            <person name="Terashima Y."/>
            <person name="Suzuki O."/>
            <person name="Nakagawa S."/>
            <person name="Senoh A."/>
            <person name="Mizoguchi H."/>
            <person name="Goto Y."/>
            <person name="Shimizu F."/>
            <person name="Wakebe H."/>
            <person name="Hishigaki H."/>
            <person name="Watanabe T."/>
            <person name="Sugiyama A."/>
            <person name="Takemoto M."/>
            <person name="Kawakami B."/>
            <person name="Yamazaki M."/>
            <person name="Watanabe K."/>
            <person name="Kumagai A."/>
            <person name="Itakura S."/>
            <person name="Fukuzumi Y."/>
            <person name="Fujimori Y."/>
            <person name="Komiyama M."/>
            <person name="Tashiro H."/>
            <person name="Tanigami A."/>
            <person name="Fujiwara T."/>
            <person name="Ono T."/>
            <person name="Yamada K."/>
            <person name="Fujii Y."/>
            <person name="Ozaki K."/>
            <person name="Hirao M."/>
            <person name="Ohmori Y."/>
            <person name="Kawabata A."/>
            <person name="Hikiji T."/>
            <person name="Kobatake N."/>
            <person name="Inagaki H."/>
            <person name="Ikema Y."/>
            <person name="Okamoto S."/>
            <person name="Okitani R."/>
            <person name="Kawakami T."/>
            <person name="Noguchi S."/>
            <person name="Itoh T."/>
            <person name="Shigeta K."/>
            <person name="Senba T."/>
            <person name="Matsumura K."/>
            <person name="Nakajima Y."/>
            <person name="Mizuno T."/>
            <person name="Morinaga M."/>
            <person name="Sasaki M."/>
            <person name="Togashi T."/>
            <person name="Oyama M."/>
            <person name="Hata H."/>
            <person name="Watanabe M."/>
            <person name="Komatsu T."/>
            <person name="Mizushima-Sugano J."/>
            <person name="Satoh T."/>
            <person name="Shirai Y."/>
            <person name="Takahashi Y."/>
            <person name="Nakagawa K."/>
            <person name="Okumura K."/>
            <person name="Nagase T."/>
            <person name="Nomura N."/>
            <person name="Kikuchi H."/>
            <person name="Masuho Y."/>
            <person name="Yamashita R."/>
            <person name="Nakai K."/>
            <person name="Yada T."/>
            <person name="Nakamura Y."/>
            <person name="Ohara O."/>
            <person name="Isogai T."/>
            <person name="Sugano S."/>
        </authorList>
    </citation>
    <scope>NUCLEOTIDE SEQUENCE [LARGE SCALE MRNA]</scope>
    <source>
        <tissue>Thalamus</tissue>
    </source>
</reference>
<reference key="3">
    <citation type="submission" date="2005-07" db="EMBL/GenBank/DDBJ databases">
        <authorList>
            <person name="Mural R.J."/>
            <person name="Istrail S."/>
            <person name="Sutton G.G."/>
            <person name="Florea L."/>
            <person name="Halpern A.L."/>
            <person name="Mobarry C.M."/>
            <person name="Lippert R."/>
            <person name="Walenz B."/>
            <person name="Shatkay H."/>
            <person name="Dew I."/>
            <person name="Miller J.R."/>
            <person name="Flanigan M.J."/>
            <person name="Edwards N.J."/>
            <person name="Bolanos R."/>
            <person name="Fasulo D."/>
            <person name="Halldorsson B.V."/>
            <person name="Hannenhalli S."/>
            <person name="Turner R."/>
            <person name="Yooseph S."/>
            <person name="Lu F."/>
            <person name="Nusskern D.R."/>
            <person name="Shue B.C."/>
            <person name="Zheng X.H."/>
            <person name="Zhong F."/>
            <person name="Delcher A.L."/>
            <person name="Huson D.H."/>
            <person name="Kravitz S.A."/>
            <person name="Mouchard L."/>
            <person name="Reinert K."/>
            <person name="Remington K.A."/>
            <person name="Clark A.G."/>
            <person name="Waterman M.S."/>
            <person name="Eichler E.E."/>
            <person name="Adams M.D."/>
            <person name="Hunkapiller M.W."/>
            <person name="Myers E.W."/>
            <person name="Venter J.C."/>
        </authorList>
    </citation>
    <scope>NUCLEOTIDE SEQUENCE [LARGE SCALE GENOMIC DNA]</scope>
</reference>
<reference key="4">
    <citation type="journal article" date="2004" name="Genome Res.">
        <title>The status, quality, and expansion of the NIH full-length cDNA project: the Mammalian Gene Collection (MGC).</title>
        <authorList>
            <consortium name="The MGC Project Team"/>
        </authorList>
    </citation>
    <scope>NUCLEOTIDE SEQUENCE [LARGE SCALE MRNA]</scope>
    <source>
        <tissue>Uterus</tissue>
    </source>
</reference>
<reference key="5">
    <citation type="journal article" date="2008" name="EMBO J.">
        <title>Distinct roles of RalA and RalB in the progression of cytokinesis are supported by distinct RalGEFs.</title>
        <authorList>
            <person name="Cascone I."/>
            <person name="Selimoglu R."/>
            <person name="Ozdemir C."/>
            <person name="Del Nery E."/>
            <person name="Yeaman C."/>
            <person name="White M."/>
            <person name="Camonis J."/>
        </authorList>
    </citation>
    <scope>SUBCELLULAR LOCATION</scope>
</reference>
<reference key="6">
    <citation type="journal article" date="2008" name="Mol. Cell">
        <title>Kinase-selective enrichment enables quantitative phosphoproteomics of the kinome across the cell cycle.</title>
        <authorList>
            <person name="Daub H."/>
            <person name="Olsen J.V."/>
            <person name="Bairlein M."/>
            <person name="Gnad F."/>
            <person name="Oppermann F.S."/>
            <person name="Korner R."/>
            <person name="Greff Z."/>
            <person name="Keri G."/>
            <person name="Stemmann O."/>
            <person name="Mann M."/>
        </authorList>
    </citation>
    <scope>PHOSPHORYLATION [LARGE SCALE ANALYSIS] AT THR-122</scope>
    <scope>IDENTIFICATION BY MASS SPECTROMETRY [LARGE SCALE ANALYSIS]</scope>
    <source>
        <tissue>Cervix carcinoma</tissue>
    </source>
</reference>
<reference key="7">
    <citation type="journal article" date="2011" name="BMC Syst. Biol.">
        <title>Initial characterization of the human central proteome.</title>
        <authorList>
            <person name="Burkard T.R."/>
            <person name="Planyavsky M."/>
            <person name="Kaupe I."/>
            <person name="Breitwieser F.P."/>
            <person name="Buerckstuemmer T."/>
            <person name="Bennett K.L."/>
            <person name="Superti-Furga G."/>
            <person name="Colinge J."/>
        </authorList>
    </citation>
    <scope>IDENTIFICATION BY MASS SPECTROMETRY [LARGE SCALE ANALYSIS]</scope>
</reference>
<reference key="8">
    <citation type="journal article" date="2012" name="Proc. Natl. Acad. Sci. U.S.A.">
        <title>N-terminal acetylome analyses and functional insights of the N-terminal acetyltransferase NatB.</title>
        <authorList>
            <person name="Van Damme P."/>
            <person name="Lasa M."/>
            <person name="Polevoda B."/>
            <person name="Gazquez C."/>
            <person name="Elosegui-Artola A."/>
            <person name="Kim D.S."/>
            <person name="De Juan-Pardo E."/>
            <person name="Demeyer K."/>
            <person name="Hole K."/>
            <person name="Larrea E."/>
            <person name="Timmerman E."/>
            <person name="Prieto J."/>
            <person name="Arnesen T."/>
            <person name="Sherman F."/>
            <person name="Gevaert K."/>
            <person name="Aldabe R."/>
        </authorList>
    </citation>
    <scope>ACETYLATION [LARGE SCALE ANALYSIS] AT ALA-2</scope>
    <scope>CLEAVAGE OF INITIATOR METHIONINE [LARGE SCALE ANALYSIS]</scope>
    <scope>IDENTIFICATION BY MASS SPECTROMETRY [LARGE SCALE ANALYSIS]</scope>
</reference>
<reference key="9">
    <citation type="journal article" date="2013" name="J. Proteome Res.">
        <title>Toward a comprehensive characterization of a human cancer cell phosphoproteome.</title>
        <authorList>
            <person name="Zhou H."/>
            <person name="Di Palma S."/>
            <person name="Preisinger C."/>
            <person name="Peng M."/>
            <person name="Polat A.N."/>
            <person name="Heck A.J."/>
            <person name="Mohammed S."/>
        </authorList>
    </citation>
    <scope>PHOSPHORYLATION [LARGE SCALE ANALYSIS] AT THR-122</scope>
    <scope>IDENTIFICATION BY MASS SPECTROMETRY [LARGE SCALE ANALYSIS]</scope>
    <source>
        <tissue>Erythroleukemia</tissue>
    </source>
</reference>
<reference key="10">
    <citation type="journal article" date="2015" name="Proteomics">
        <title>N-terminome analysis of the human mitochondrial proteome.</title>
        <authorList>
            <person name="Vaca Jacome A.S."/>
            <person name="Rabilloud T."/>
            <person name="Schaeffer-Reiss C."/>
            <person name="Rompais M."/>
            <person name="Ayoub D."/>
            <person name="Lane L."/>
            <person name="Bairoch A."/>
            <person name="Van Dorsselaer A."/>
            <person name="Carapito C."/>
        </authorList>
    </citation>
    <scope>IDENTIFICATION BY MASS SPECTROMETRY [LARGE SCALE ANALYSIS]</scope>
</reference>
<organism>
    <name type="scientific">Homo sapiens</name>
    <name type="common">Human</name>
    <dbReference type="NCBI Taxonomy" id="9606"/>
    <lineage>
        <taxon>Eukaryota</taxon>
        <taxon>Metazoa</taxon>
        <taxon>Chordata</taxon>
        <taxon>Craniata</taxon>
        <taxon>Vertebrata</taxon>
        <taxon>Euteleostomi</taxon>
        <taxon>Mammalia</taxon>
        <taxon>Eutheria</taxon>
        <taxon>Euarchontoglires</taxon>
        <taxon>Primates</taxon>
        <taxon>Haplorrhini</taxon>
        <taxon>Catarrhini</taxon>
        <taxon>Hominidae</taxon>
        <taxon>Homo</taxon>
    </lineage>
</organism>